<feature type="chain" id="PRO_0000297630" description="HUWE1-associated protein modifying stress responses">
    <location>
        <begin position="1"/>
        <end position="265"/>
    </location>
</feature>
<feature type="region of interest" description="Disordered" evidence="2">
    <location>
        <begin position="1"/>
        <end position="22"/>
    </location>
</feature>
<feature type="region of interest" description="Disordered" evidence="2">
    <location>
        <begin position="145"/>
        <end position="170"/>
    </location>
</feature>
<feature type="region of interest" description="Disordered" evidence="2">
    <location>
        <begin position="195"/>
        <end position="218"/>
    </location>
</feature>
<feature type="region of interest" description="Disordered" evidence="2">
    <location>
        <begin position="240"/>
        <end position="265"/>
    </location>
</feature>
<feature type="compositionally biased region" description="Polar residues" evidence="2">
    <location>
        <begin position="156"/>
        <end position="170"/>
    </location>
</feature>
<feature type="compositionally biased region" description="Polar residues" evidence="2">
    <location>
        <begin position="195"/>
        <end position="212"/>
    </location>
</feature>
<comment type="function">
    <text evidence="1">Acts as a central player within a network of stress response pathways promoting cellular adaptability. Functions as a negative regulator of TP53/P53 in the cellular response to telomere erosion and probably also DNA damage.</text>
</comment>
<comment type="subunit">
    <text evidence="1">Oligomer.</text>
</comment>
<comment type="subcellular location">
    <subcellularLocation>
        <location evidence="1">Nucleus</location>
    </subcellularLocation>
    <subcellularLocation>
        <location evidence="1">Cytoplasm</location>
    </subcellularLocation>
</comment>
<comment type="similarity">
    <text evidence="3">Belongs to the TAPR1 family.</text>
</comment>
<protein>
    <recommendedName>
        <fullName evidence="3">HUWE1-associated protein modifying stress responses</fullName>
    </recommendedName>
    <alternativeName>
        <fullName evidence="1">Telomere attrition and p53 response 1 protein</fullName>
    </alternativeName>
</protein>
<name>HAPR1_XENLA</name>
<proteinExistence type="evidence at transcript level"/>
<gene>
    <name evidence="3" type="primary">hapstr1</name>
    <name evidence="1" type="synonym">tapr1</name>
</gene>
<organism>
    <name type="scientific">Xenopus laevis</name>
    <name type="common">African clawed frog</name>
    <dbReference type="NCBI Taxonomy" id="8355"/>
    <lineage>
        <taxon>Eukaryota</taxon>
        <taxon>Metazoa</taxon>
        <taxon>Chordata</taxon>
        <taxon>Craniata</taxon>
        <taxon>Vertebrata</taxon>
        <taxon>Euteleostomi</taxon>
        <taxon>Amphibia</taxon>
        <taxon>Batrachia</taxon>
        <taxon>Anura</taxon>
        <taxon>Pipoidea</taxon>
        <taxon>Pipidae</taxon>
        <taxon>Xenopodinae</taxon>
        <taxon>Xenopus</taxon>
        <taxon>Xenopus</taxon>
    </lineage>
</organism>
<evidence type="ECO:0000250" key="1">
    <source>
        <dbReference type="UniProtKB" id="Q14CZ0"/>
    </source>
</evidence>
<evidence type="ECO:0000256" key="2">
    <source>
        <dbReference type="SAM" id="MobiDB-lite"/>
    </source>
</evidence>
<evidence type="ECO:0000305" key="3"/>
<reference key="1">
    <citation type="submission" date="2003-10" db="EMBL/GenBank/DDBJ databases">
        <authorList>
            <consortium name="NIH - Xenopus Gene Collection (XGC) project"/>
        </authorList>
    </citation>
    <scope>NUCLEOTIDE SEQUENCE [LARGE SCALE MRNA]</scope>
    <source>
        <tissue>Kidney</tissue>
    </source>
</reference>
<dbReference type="EMBL" id="BC060006">
    <property type="protein sequence ID" value="AAH60006.1"/>
    <property type="molecule type" value="mRNA"/>
</dbReference>
<dbReference type="RefSeq" id="NP_001083200.1">
    <property type="nucleotide sequence ID" value="NM_001089731.1"/>
</dbReference>
<dbReference type="DNASU" id="398798"/>
<dbReference type="GeneID" id="398798"/>
<dbReference type="KEGG" id="xla:398798"/>
<dbReference type="AGR" id="Xenbase:XB-GENE-957514"/>
<dbReference type="CTD" id="398798"/>
<dbReference type="Xenbase" id="XB-GENE-957514">
    <property type="gene designation" value="hapstr1.S"/>
</dbReference>
<dbReference type="OMA" id="SWERQCL"/>
<dbReference type="OrthoDB" id="5823474at2759"/>
<dbReference type="Proteomes" id="UP000186698">
    <property type="component" value="Chromosome 9_10S"/>
</dbReference>
<dbReference type="Bgee" id="398798">
    <property type="expression patterns" value="Expressed in testis and 19 other cell types or tissues"/>
</dbReference>
<dbReference type="GO" id="GO:0005737">
    <property type="term" value="C:cytoplasm"/>
    <property type="evidence" value="ECO:0000250"/>
    <property type="project" value="UniProtKB"/>
</dbReference>
<dbReference type="GO" id="GO:0005634">
    <property type="term" value="C:nucleus"/>
    <property type="evidence" value="ECO:0000250"/>
    <property type="project" value="UniProtKB"/>
</dbReference>
<dbReference type="GO" id="GO:1901797">
    <property type="term" value="P:negative regulation of signal transduction by p53 class mediator"/>
    <property type="evidence" value="ECO:0000250"/>
    <property type="project" value="UniProtKB"/>
</dbReference>
<dbReference type="GO" id="GO:0080135">
    <property type="term" value="P:regulation of cellular response to stress"/>
    <property type="evidence" value="ECO:0000250"/>
    <property type="project" value="UniProtKB"/>
</dbReference>
<dbReference type="InterPro" id="IPR040308">
    <property type="entry name" value="HAPR1"/>
</dbReference>
<dbReference type="InterPro" id="IPR029196">
    <property type="entry name" value="HAPSTR1-like"/>
</dbReference>
<dbReference type="PANTHER" id="PTHR31624:SF4">
    <property type="entry name" value="CHROMOSOME 16 OPEN READING FRAME 72"/>
    <property type="match status" value="1"/>
</dbReference>
<dbReference type="PANTHER" id="PTHR31624">
    <property type="entry name" value="UPF0472 PROTEIN C16ORF72"/>
    <property type="match status" value="1"/>
</dbReference>
<dbReference type="Pfam" id="PF15251">
    <property type="entry name" value="TAPR1-like"/>
    <property type="match status" value="1"/>
</dbReference>
<accession>Q6PAX8</accession>
<keyword id="KW-0963">Cytoplasm</keyword>
<keyword id="KW-0539">Nucleus</keyword>
<keyword id="KW-1185">Reference proteome</keyword>
<keyword id="KW-0346">Stress response</keyword>
<sequence>MEDKKEEGESEIQEHGPEHWFSKWERQCLAEAEQEDQPEEEAEQSQQKLWHLFQNSATAVAQLYKDRVCQQQGLSLWVPFQNAATAVTNLYKESVDAHQRSFDLGIQIGYQRRNKDVLAWVKKRRRTIRREDLISFLCGKVPPPRNSRAPPRLTVVSPNRATPTETGSSVETDLQPFREAIALHGLSGAMASISVRSSTPGSPTHVSGSSNTGRRRNGLHDVDLNTFISEEMALHLDNGGTRKRSSAQCGDVITDSPTHKRNRMI</sequence>